<keyword id="KW-1185">Reference proteome</keyword>
<keyword id="KW-0687">Ribonucleoprotein</keyword>
<keyword id="KW-0689">Ribosomal protein</keyword>
<protein>
    <recommendedName>
        <fullName evidence="1">Large ribosomal subunit protein bL27</fullName>
    </recommendedName>
    <alternativeName>
        <fullName evidence="3">50S ribosomal protein L27</fullName>
    </alternativeName>
</protein>
<dbReference type="EMBL" id="AM494475">
    <property type="protein sequence ID" value="CAM81014.1"/>
    <property type="molecule type" value="Genomic_DNA"/>
</dbReference>
<dbReference type="RefSeq" id="WP_011945103.1">
    <property type="nucleotide sequence ID" value="NC_009488.1"/>
</dbReference>
<dbReference type="SMR" id="A5CF98"/>
<dbReference type="KEGG" id="ots:OTBS_1919"/>
<dbReference type="eggNOG" id="COG0211">
    <property type="taxonomic scope" value="Bacteria"/>
</dbReference>
<dbReference type="HOGENOM" id="CLU_095424_4_1_5"/>
<dbReference type="Proteomes" id="UP000001565">
    <property type="component" value="Chromosome"/>
</dbReference>
<dbReference type="GO" id="GO:1990904">
    <property type="term" value="C:ribonucleoprotein complex"/>
    <property type="evidence" value="ECO:0007669"/>
    <property type="project" value="UniProtKB-KW"/>
</dbReference>
<dbReference type="GO" id="GO:0005840">
    <property type="term" value="C:ribosome"/>
    <property type="evidence" value="ECO:0007669"/>
    <property type="project" value="UniProtKB-KW"/>
</dbReference>
<dbReference type="GO" id="GO:0003735">
    <property type="term" value="F:structural constituent of ribosome"/>
    <property type="evidence" value="ECO:0007669"/>
    <property type="project" value="InterPro"/>
</dbReference>
<dbReference type="GO" id="GO:0006412">
    <property type="term" value="P:translation"/>
    <property type="evidence" value="ECO:0007669"/>
    <property type="project" value="UniProtKB-UniRule"/>
</dbReference>
<dbReference type="FunFam" id="2.40.50.100:FF:000020">
    <property type="entry name" value="50S ribosomal protein L27"/>
    <property type="match status" value="1"/>
</dbReference>
<dbReference type="Gene3D" id="2.40.50.100">
    <property type="match status" value="1"/>
</dbReference>
<dbReference type="HAMAP" id="MF_00539">
    <property type="entry name" value="Ribosomal_bL27"/>
    <property type="match status" value="1"/>
</dbReference>
<dbReference type="InterPro" id="IPR001684">
    <property type="entry name" value="Ribosomal_bL27"/>
</dbReference>
<dbReference type="NCBIfam" id="TIGR00062">
    <property type="entry name" value="L27"/>
    <property type="match status" value="1"/>
</dbReference>
<dbReference type="PANTHER" id="PTHR15893:SF0">
    <property type="entry name" value="LARGE RIBOSOMAL SUBUNIT PROTEIN BL27M"/>
    <property type="match status" value="1"/>
</dbReference>
<dbReference type="PANTHER" id="PTHR15893">
    <property type="entry name" value="RIBOSOMAL PROTEIN L27"/>
    <property type="match status" value="1"/>
</dbReference>
<dbReference type="Pfam" id="PF01016">
    <property type="entry name" value="Ribosomal_L27"/>
    <property type="match status" value="1"/>
</dbReference>
<dbReference type="PRINTS" id="PR00063">
    <property type="entry name" value="RIBOSOMALL27"/>
</dbReference>
<dbReference type="SUPFAM" id="SSF110324">
    <property type="entry name" value="Ribosomal L27 protein-like"/>
    <property type="match status" value="1"/>
</dbReference>
<sequence>MATKKAGGSSKNGRDSAGRRLGLKKTDGQLVNAGNIIVKQRGTKFYPGKNVGLGKDHTIFSLVSGKVKFFRKKKNRVFISVVVDDSTAA</sequence>
<feature type="chain" id="PRO_1000017538" description="Large ribosomal subunit protein bL27">
    <location>
        <begin position="1"/>
        <end position="89"/>
    </location>
</feature>
<feature type="region of interest" description="Disordered" evidence="2">
    <location>
        <begin position="1"/>
        <end position="26"/>
    </location>
</feature>
<proteinExistence type="inferred from homology"/>
<organism>
    <name type="scientific">Orientia tsutsugamushi (strain Boryong)</name>
    <name type="common">Rickettsia tsutsugamushi</name>
    <dbReference type="NCBI Taxonomy" id="357244"/>
    <lineage>
        <taxon>Bacteria</taxon>
        <taxon>Pseudomonadati</taxon>
        <taxon>Pseudomonadota</taxon>
        <taxon>Alphaproteobacteria</taxon>
        <taxon>Rickettsiales</taxon>
        <taxon>Rickettsiaceae</taxon>
        <taxon>Rickettsieae</taxon>
        <taxon>Orientia</taxon>
    </lineage>
</organism>
<evidence type="ECO:0000255" key="1">
    <source>
        <dbReference type="HAMAP-Rule" id="MF_00539"/>
    </source>
</evidence>
<evidence type="ECO:0000256" key="2">
    <source>
        <dbReference type="SAM" id="MobiDB-lite"/>
    </source>
</evidence>
<evidence type="ECO:0000305" key="3"/>
<name>RL27_ORITB</name>
<comment type="similarity">
    <text evidence="1">Belongs to the bacterial ribosomal protein bL27 family.</text>
</comment>
<accession>A5CF98</accession>
<reference key="1">
    <citation type="journal article" date="2007" name="Proc. Natl. Acad. Sci. U.S.A.">
        <title>The Orientia tsutsugamushi genome reveals massive proliferation of conjugative type IV secretion system and host-cell interaction genes.</title>
        <authorList>
            <person name="Cho N.-H."/>
            <person name="Kim H.-R."/>
            <person name="Lee J.-H."/>
            <person name="Kim S.-Y."/>
            <person name="Kim J."/>
            <person name="Cha S."/>
            <person name="Kim S.-Y."/>
            <person name="Darby A.C."/>
            <person name="Fuxelius H.-H."/>
            <person name="Yin J."/>
            <person name="Kim J.H."/>
            <person name="Kim J."/>
            <person name="Lee S.J."/>
            <person name="Koh Y.-S."/>
            <person name="Jang W.-J."/>
            <person name="Park K.-H."/>
            <person name="Andersson S.G.E."/>
            <person name="Choi M.-S."/>
            <person name="Kim I.-S."/>
        </authorList>
    </citation>
    <scope>NUCLEOTIDE SEQUENCE [LARGE SCALE GENOMIC DNA]</scope>
    <source>
        <strain>Boryong</strain>
    </source>
</reference>
<gene>
    <name evidence="1" type="primary">rpmA</name>
    <name type="ordered locus">OTBS_1919</name>
</gene>